<dbReference type="EMBL" id="AY704572">
    <property type="protein sequence ID" value="AAU81911.1"/>
    <property type="molecule type" value="Genomic_DNA"/>
</dbReference>
<dbReference type="EMBL" id="AY741371">
    <property type="protein sequence ID" value="AAX13839.1"/>
    <property type="molecule type" value="Genomic_DNA"/>
</dbReference>
<dbReference type="RefSeq" id="YP_277340.1">
    <property type="nucleotide sequence ID" value="NC_007288.1"/>
</dbReference>
<dbReference type="SMR" id="Q4G3C7"/>
<dbReference type="STRING" id="2903.Q4G3C7"/>
<dbReference type="GeneID" id="3562516"/>
<dbReference type="GO" id="GO:0009535">
    <property type="term" value="C:chloroplast thylakoid membrane"/>
    <property type="evidence" value="ECO:0007669"/>
    <property type="project" value="UniProtKB-SubCell"/>
</dbReference>
<dbReference type="GO" id="GO:0009539">
    <property type="term" value="C:photosystem II reaction center"/>
    <property type="evidence" value="ECO:0007669"/>
    <property type="project" value="InterPro"/>
</dbReference>
<dbReference type="GO" id="GO:0015979">
    <property type="term" value="P:photosynthesis"/>
    <property type="evidence" value="ECO:0007669"/>
    <property type="project" value="UniProtKB-UniRule"/>
</dbReference>
<dbReference type="HAMAP" id="MF_00441">
    <property type="entry name" value="PSII_PsbK"/>
    <property type="match status" value="1"/>
</dbReference>
<dbReference type="InterPro" id="IPR003687">
    <property type="entry name" value="PSII_PsbK"/>
</dbReference>
<dbReference type="InterPro" id="IPR037270">
    <property type="entry name" value="PSII_PsbK_sf"/>
</dbReference>
<dbReference type="NCBIfam" id="NF002715">
    <property type="entry name" value="PRK02553.1"/>
    <property type="match status" value="1"/>
</dbReference>
<dbReference type="PANTHER" id="PTHR35325">
    <property type="match status" value="1"/>
</dbReference>
<dbReference type="PANTHER" id="PTHR35325:SF1">
    <property type="entry name" value="PHOTOSYSTEM II REACTION CENTER PROTEIN K"/>
    <property type="match status" value="1"/>
</dbReference>
<dbReference type="Pfam" id="PF02533">
    <property type="entry name" value="PsbK"/>
    <property type="match status" value="1"/>
</dbReference>
<dbReference type="SUPFAM" id="SSF161037">
    <property type="entry name" value="Photosystem II reaction center protein K, PsbK"/>
    <property type="match status" value="1"/>
</dbReference>
<geneLocation type="chloroplast"/>
<comment type="function">
    <text evidence="1">One of the components of the core complex of photosystem II (PSII). PSII is a light-driven water:plastoquinone oxidoreductase that uses light energy to abstract electrons from H(2)O, generating O(2) and a proton gradient subsequently used for ATP formation. It consists of a core antenna complex that captures photons, and an electron transfer chain that converts photonic excitation into a charge separation.</text>
</comment>
<comment type="subunit">
    <text evidence="1">PSII is composed of 1 copy each of membrane proteins PsbA, PsbB, PsbC, PsbD, PsbE, PsbF, PsbH, PsbI, PsbJ, PsbK, PsbL, PsbM, PsbT, PsbX, PsbY, PsbZ, Psb30/Ycf12, at least 3 peripheral proteins of the oxygen-evolving complex and a large number of cofactors. It forms dimeric complexes.</text>
</comment>
<comment type="subcellular location">
    <subcellularLocation>
        <location evidence="1">Plastid</location>
        <location evidence="1">Chloroplast thylakoid membrane</location>
        <topology evidence="1">Single-pass membrane protein</topology>
    </subcellularLocation>
</comment>
<comment type="similarity">
    <text evidence="1">Belongs to the PsbK family.</text>
</comment>
<protein>
    <recommendedName>
        <fullName evidence="1">Photosystem II reaction center protein K</fullName>
        <shortName evidence="1">PSII-K</shortName>
    </recommendedName>
</protein>
<keyword id="KW-0150">Chloroplast</keyword>
<keyword id="KW-0472">Membrane</keyword>
<keyword id="KW-0602">Photosynthesis</keyword>
<keyword id="KW-0604">Photosystem II</keyword>
<keyword id="KW-0934">Plastid</keyword>
<keyword id="KW-0674">Reaction center</keyword>
<keyword id="KW-0793">Thylakoid</keyword>
<keyword id="KW-0812">Transmembrane</keyword>
<keyword id="KW-1133">Transmembrane helix</keyword>
<organism>
    <name type="scientific">Emiliania huxleyi</name>
    <name type="common">Coccolithophore</name>
    <name type="synonym">Pontosphaera huxleyi</name>
    <dbReference type="NCBI Taxonomy" id="2903"/>
    <lineage>
        <taxon>Eukaryota</taxon>
        <taxon>Haptista</taxon>
        <taxon>Haptophyta</taxon>
        <taxon>Prymnesiophyceae</taxon>
        <taxon>Isochrysidales</taxon>
        <taxon>Noelaerhabdaceae</taxon>
        <taxon>Emiliania</taxon>
    </lineage>
</organism>
<gene>
    <name evidence="1" type="primary">psbK</name>
</gene>
<accession>Q4G3C7</accession>
<feature type="propeptide" id="PRO_0000276192" evidence="1">
    <location>
        <begin position="1"/>
        <end position="8"/>
    </location>
</feature>
<feature type="chain" id="PRO_0000276193" description="Photosystem II reaction center protein K" evidence="1">
    <location>
        <begin position="9"/>
        <end position="45"/>
    </location>
</feature>
<feature type="transmembrane region" description="Helical" evidence="1">
    <location>
        <begin position="20"/>
        <end position="40"/>
    </location>
</feature>
<name>PSBK_EMIHU</name>
<sequence>MDVNFLLSALPEPYAAFRPIVDVMPAIPVFFLLLAFVWQASVGFR</sequence>
<reference key="1">
    <citation type="journal article" date="2006" name="J. Mol. Evol.">
        <title>Rate variation as a function of gene origin in plastid-derived genes of peridinin-containing dinoflagellates.</title>
        <authorList>
            <person name="Bachvaroff T.R."/>
            <person name="Sanchez-Puerta M.V."/>
            <person name="Delwiche C.F."/>
        </authorList>
    </citation>
    <scope>NUCLEOTIDE SEQUENCE [GENOMIC DNA]</scope>
    <source>
        <strain>CCMP373 / CSIRO-CS-57 / BT6</strain>
    </source>
</reference>
<reference key="2">
    <citation type="journal article" date="2005" name="DNA Res.">
        <title>The complete plastid genome sequence of the haptophyte Emiliania huxleyi: a comparison to other plastid genomes.</title>
        <authorList>
            <person name="Sanchez-Puerta M.V."/>
            <person name="Bachvaroff T.R."/>
            <person name="Delwiche C.F."/>
        </authorList>
    </citation>
    <scope>NUCLEOTIDE SEQUENCE [LARGE SCALE GENOMIC DNA]</scope>
    <source>
        <strain>CCMP373 / CSIRO-CS-57 / BT6</strain>
    </source>
</reference>
<proteinExistence type="inferred from homology"/>
<evidence type="ECO:0000255" key="1">
    <source>
        <dbReference type="HAMAP-Rule" id="MF_00441"/>
    </source>
</evidence>